<reference key="1">
    <citation type="journal article" date="2010" name="Genome Biol.">
        <title>Structure and dynamics of the pan-genome of Streptococcus pneumoniae and closely related species.</title>
        <authorList>
            <person name="Donati C."/>
            <person name="Hiller N.L."/>
            <person name="Tettelin H."/>
            <person name="Muzzi A."/>
            <person name="Croucher N.J."/>
            <person name="Angiuoli S.V."/>
            <person name="Oggioni M."/>
            <person name="Dunning Hotopp J.C."/>
            <person name="Hu F.Z."/>
            <person name="Riley D.R."/>
            <person name="Covacci A."/>
            <person name="Mitchell T.J."/>
            <person name="Bentley S.D."/>
            <person name="Kilian M."/>
            <person name="Ehrlich G.D."/>
            <person name="Rappuoli R."/>
            <person name="Moxon E.R."/>
            <person name="Masignani V."/>
        </authorList>
    </citation>
    <scope>NUCLEOTIDE SEQUENCE [LARGE SCALE GENOMIC DNA]</scope>
    <source>
        <strain>70585</strain>
    </source>
</reference>
<evidence type="ECO:0000255" key="1">
    <source>
        <dbReference type="HAMAP-Rule" id="MF_00092"/>
    </source>
</evidence>
<name>MUTS2_STRP7</name>
<proteinExistence type="inferred from homology"/>
<comment type="function">
    <text evidence="1">Endonuclease that is involved in the suppression of homologous recombination and thus may have a key role in the control of bacterial genetic diversity.</text>
</comment>
<comment type="function">
    <text evidence="1">Acts as a ribosome collision sensor, splitting the ribosome into its 2 subunits. Detects stalled/collided 70S ribosomes which it binds and splits by an ATP-hydrolysis driven conformational change. Acts upstream of the ribosome quality control system (RQC), a ribosome-associated complex that mediates the extraction of incompletely synthesized nascent chains from stalled ribosomes and their subsequent degradation. Probably generates substrates for RQC.</text>
</comment>
<comment type="subunit">
    <text evidence="1">Homodimer. Binds to stalled ribosomes, contacting rRNA.</text>
</comment>
<comment type="similarity">
    <text evidence="1">Belongs to the DNA mismatch repair MutS family. MutS2 subfamily.</text>
</comment>
<accession>C1C5E4</accession>
<gene>
    <name evidence="1" type="primary">mutS2</name>
    <name evidence="1" type="synonym">rqcU</name>
    <name type="ordered locus">SP70585_0478</name>
</gene>
<sequence>MNKKILETLEFDKIKALFEPHLLTEQGLEQLRQLAPTAKADKIKQAFAEMKEMQALFVEQPHFTILSTKEIAGVCKRLEMGADLNIEEFLLLKRVLLTSRELQSFYANLENVSLEELALWFEKLHDFPQLQGNLQAFNDAGFIENFASEELARIRRKIHDSESQVRDVLQDLLKQKAQMLTEGIVASRNGRQVLPVKNTYRNKIAGVVHDISASGNTVYIEPREVVKLSEEIASLRADERYEMLRILQEISERVRPHAAEIANDAWIIGHLDLIRAKVRFIQERQAVVPQLSENQEIQLLHVCHPLVKNAVANDVYFGQDLTAIVITGPNTGGKTIMLKTLGLTQVMAQSGLPILADKGSRVGIFEEIFADIGDEQSIEQSLSTFSSHMTNIVDILGKVNQHSLLLLDELGAGTDPQEGAALAMAILEDLRLRQIKTMATTHYPELKAYGIETAFVQNASMEFDTATLRPTYRFMQGVPGRSNAFEIAKRLGLSEVIVGDASQQIDQDNDVNRIIEQLEEQTLESRKRLDNIREVEQENLKMNRVLKKLYNELNREKETELNKAREQAAEIVDMALSESDQILKNLHSKSQLKPHEIIEAKAKLKKLAPEKVDLSKNKVLQKAKKKRAPKVGDDIVVLSYGQRGTLTSQLKDGRWEAQVGLIKMTLEEKEFDLVQAQQEKPVKKKQVNVVKRTSGRGPQARLDLRGKRYEEAMNELDTFIDQALLNNMAQVDIIHGIGTGVIREGVTKYLQRNKHVKSFGYAPQNAGGSGATIVTFKG</sequence>
<dbReference type="EC" id="3.1.-.-" evidence="1"/>
<dbReference type="EC" id="3.6.4.-" evidence="1"/>
<dbReference type="EMBL" id="CP000918">
    <property type="protein sequence ID" value="ACO16076.1"/>
    <property type="molecule type" value="Genomic_DNA"/>
</dbReference>
<dbReference type="RefSeq" id="WP_001035000.1">
    <property type="nucleotide sequence ID" value="NC_012468.1"/>
</dbReference>
<dbReference type="SMR" id="C1C5E4"/>
<dbReference type="KEGG" id="snm:SP70585_0478"/>
<dbReference type="HOGENOM" id="CLU_011252_2_1_9"/>
<dbReference type="Proteomes" id="UP000002211">
    <property type="component" value="Chromosome"/>
</dbReference>
<dbReference type="GO" id="GO:0005524">
    <property type="term" value="F:ATP binding"/>
    <property type="evidence" value="ECO:0007669"/>
    <property type="project" value="UniProtKB-UniRule"/>
</dbReference>
<dbReference type="GO" id="GO:0016887">
    <property type="term" value="F:ATP hydrolysis activity"/>
    <property type="evidence" value="ECO:0007669"/>
    <property type="project" value="InterPro"/>
</dbReference>
<dbReference type="GO" id="GO:0140664">
    <property type="term" value="F:ATP-dependent DNA damage sensor activity"/>
    <property type="evidence" value="ECO:0007669"/>
    <property type="project" value="InterPro"/>
</dbReference>
<dbReference type="GO" id="GO:0004519">
    <property type="term" value="F:endonuclease activity"/>
    <property type="evidence" value="ECO:0007669"/>
    <property type="project" value="UniProtKB-UniRule"/>
</dbReference>
<dbReference type="GO" id="GO:0030983">
    <property type="term" value="F:mismatched DNA binding"/>
    <property type="evidence" value="ECO:0007669"/>
    <property type="project" value="InterPro"/>
</dbReference>
<dbReference type="GO" id="GO:0043023">
    <property type="term" value="F:ribosomal large subunit binding"/>
    <property type="evidence" value="ECO:0007669"/>
    <property type="project" value="UniProtKB-UniRule"/>
</dbReference>
<dbReference type="GO" id="GO:0019843">
    <property type="term" value="F:rRNA binding"/>
    <property type="evidence" value="ECO:0007669"/>
    <property type="project" value="UniProtKB-UniRule"/>
</dbReference>
<dbReference type="GO" id="GO:0006298">
    <property type="term" value="P:mismatch repair"/>
    <property type="evidence" value="ECO:0007669"/>
    <property type="project" value="InterPro"/>
</dbReference>
<dbReference type="GO" id="GO:0045910">
    <property type="term" value="P:negative regulation of DNA recombination"/>
    <property type="evidence" value="ECO:0007669"/>
    <property type="project" value="InterPro"/>
</dbReference>
<dbReference type="GO" id="GO:0072344">
    <property type="term" value="P:rescue of stalled ribosome"/>
    <property type="evidence" value="ECO:0007669"/>
    <property type="project" value="UniProtKB-UniRule"/>
</dbReference>
<dbReference type="FunFam" id="3.30.1370.110:FF:000005">
    <property type="entry name" value="Endonuclease MutS2"/>
    <property type="match status" value="1"/>
</dbReference>
<dbReference type="FunFam" id="3.40.50.300:FF:000830">
    <property type="entry name" value="Endonuclease MutS2"/>
    <property type="match status" value="1"/>
</dbReference>
<dbReference type="Gene3D" id="3.30.1370.110">
    <property type="match status" value="1"/>
</dbReference>
<dbReference type="Gene3D" id="3.40.50.300">
    <property type="entry name" value="P-loop containing nucleotide triphosphate hydrolases"/>
    <property type="match status" value="1"/>
</dbReference>
<dbReference type="HAMAP" id="MF_00092">
    <property type="entry name" value="MutS2"/>
    <property type="match status" value="1"/>
</dbReference>
<dbReference type="InterPro" id="IPR000432">
    <property type="entry name" value="DNA_mismatch_repair_MutS_C"/>
</dbReference>
<dbReference type="InterPro" id="IPR007696">
    <property type="entry name" value="DNA_mismatch_repair_MutS_core"/>
</dbReference>
<dbReference type="InterPro" id="IPR036187">
    <property type="entry name" value="DNA_mismatch_repair_MutS_sf"/>
</dbReference>
<dbReference type="InterPro" id="IPR046893">
    <property type="entry name" value="MSSS"/>
</dbReference>
<dbReference type="InterPro" id="IPR045076">
    <property type="entry name" value="MutS"/>
</dbReference>
<dbReference type="InterPro" id="IPR005747">
    <property type="entry name" value="MutS2"/>
</dbReference>
<dbReference type="InterPro" id="IPR027417">
    <property type="entry name" value="P-loop_NTPase"/>
</dbReference>
<dbReference type="InterPro" id="IPR002625">
    <property type="entry name" value="Smr_dom"/>
</dbReference>
<dbReference type="InterPro" id="IPR036063">
    <property type="entry name" value="Smr_dom_sf"/>
</dbReference>
<dbReference type="NCBIfam" id="TIGR01069">
    <property type="entry name" value="mutS2"/>
    <property type="match status" value="1"/>
</dbReference>
<dbReference type="PANTHER" id="PTHR48466">
    <property type="entry name" value="OS10G0509000 PROTEIN-RELATED"/>
    <property type="match status" value="1"/>
</dbReference>
<dbReference type="PANTHER" id="PTHR48466:SF1">
    <property type="entry name" value="SMR DOMAIN-CONTAINING PROTEIN"/>
    <property type="match status" value="1"/>
</dbReference>
<dbReference type="Pfam" id="PF20297">
    <property type="entry name" value="MSSS"/>
    <property type="match status" value="1"/>
</dbReference>
<dbReference type="Pfam" id="PF00488">
    <property type="entry name" value="MutS_V"/>
    <property type="match status" value="1"/>
</dbReference>
<dbReference type="Pfam" id="PF01713">
    <property type="entry name" value="Smr"/>
    <property type="match status" value="1"/>
</dbReference>
<dbReference type="PIRSF" id="PIRSF005814">
    <property type="entry name" value="MutS_YshD"/>
    <property type="match status" value="1"/>
</dbReference>
<dbReference type="SMART" id="SM00534">
    <property type="entry name" value="MUTSac"/>
    <property type="match status" value="1"/>
</dbReference>
<dbReference type="SMART" id="SM00533">
    <property type="entry name" value="MUTSd"/>
    <property type="match status" value="1"/>
</dbReference>
<dbReference type="SMART" id="SM00463">
    <property type="entry name" value="SMR"/>
    <property type="match status" value="1"/>
</dbReference>
<dbReference type="SUPFAM" id="SSF48334">
    <property type="entry name" value="DNA repair protein MutS, domain III"/>
    <property type="match status" value="1"/>
</dbReference>
<dbReference type="SUPFAM" id="SSF52540">
    <property type="entry name" value="P-loop containing nucleoside triphosphate hydrolases"/>
    <property type="match status" value="1"/>
</dbReference>
<dbReference type="SUPFAM" id="SSF160443">
    <property type="entry name" value="SMR domain-like"/>
    <property type="match status" value="1"/>
</dbReference>
<dbReference type="PROSITE" id="PS00486">
    <property type="entry name" value="DNA_MISMATCH_REPAIR_2"/>
    <property type="match status" value="1"/>
</dbReference>
<dbReference type="PROSITE" id="PS50828">
    <property type="entry name" value="SMR"/>
    <property type="match status" value="1"/>
</dbReference>
<organism>
    <name type="scientific">Streptococcus pneumoniae (strain 70585)</name>
    <dbReference type="NCBI Taxonomy" id="488221"/>
    <lineage>
        <taxon>Bacteria</taxon>
        <taxon>Bacillati</taxon>
        <taxon>Bacillota</taxon>
        <taxon>Bacilli</taxon>
        <taxon>Lactobacillales</taxon>
        <taxon>Streptococcaceae</taxon>
        <taxon>Streptococcus</taxon>
    </lineage>
</organism>
<keyword id="KW-0067">ATP-binding</keyword>
<keyword id="KW-0238">DNA-binding</keyword>
<keyword id="KW-0255">Endonuclease</keyword>
<keyword id="KW-0378">Hydrolase</keyword>
<keyword id="KW-0540">Nuclease</keyword>
<keyword id="KW-0547">Nucleotide-binding</keyword>
<keyword id="KW-0694">RNA-binding</keyword>
<keyword id="KW-0699">rRNA-binding</keyword>
<feature type="chain" id="PRO_1000118567" description="Endonuclease MutS2">
    <location>
        <begin position="1"/>
        <end position="778"/>
    </location>
</feature>
<feature type="domain" description="Smr" evidence="1">
    <location>
        <begin position="702"/>
        <end position="777"/>
    </location>
</feature>
<feature type="binding site" evidence="1">
    <location>
        <begin position="328"/>
        <end position="335"/>
    </location>
    <ligand>
        <name>ATP</name>
        <dbReference type="ChEBI" id="CHEBI:30616"/>
    </ligand>
</feature>
<protein>
    <recommendedName>
        <fullName evidence="1">Endonuclease MutS2</fullName>
        <ecNumber evidence="1">3.1.-.-</ecNumber>
    </recommendedName>
    <alternativeName>
        <fullName evidence="1">Ribosome-associated protein quality control-upstream factor</fullName>
        <shortName evidence="1">RQC-upstream factor</shortName>
        <shortName evidence="1">RqcU</shortName>
        <ecNumber evidence="1">3.6.4.-</ecNumber>
    </alternativeName>
</protein>